<proteinExistence type="inferred from homology"/>
<protein>
    <recommendedName>
        <fullName evidence="1">Protein translocase subunit SecY</fullName>
    </recommendedName>
</protein>
<sequence>MLTAFARAFRTPDLRKKLLFTLAIIVVYRVGTHIPIPGVDYKNVQQCVREASGNQGLFGLVNMFSGGALLQITIFALGIMPYITASIILQLLTVVIPRLEALKKEGQAGTAKITQYTRYLTVALAILQGTGLVATARSAPLFGRCSVGGQIVPDQSIFTTITMVICMTAGTCVVMWLGELITDRGIGNGMSILMFISIAATFPSALWAIKKQGTLAGGWIEFGTVIAVGLIMVALVVFVEQAQRRIPVQYAKRMIGRRSYGGTSTYIPLKVNQAGVIPVIFASSLLYIPALVAQFAGGNSGWKSWVEQNLTKGDHPIYIVTYFLLIVFFAFFYVAISFNPEEVADNMKKYGGFIPGIRAGRPTAEYLSYVLNRITWPGSLYLGLIALVPTMALVGFGASQNFPFGGTSILIIVGVGLETVKQIESQLQQRNYEGFLR</sequence>
<feature type="chain" id="PRO_0000131751" description="Protein translocase subunit SecY">
    <location>
        <begin position="1"/>
        <end position="437"/>
    </location>
</feature>
<feature type="transmembrane region" description="Helical" evidence="1">
    <location>
        <begin position="19"/>
        <end position="39"/>
    </location>
</feature>
<feature type="transmembrane region" description="Helical" evidence="1">
    <location>
        <begin position="69"/>
        <end position="89"/>
    </location>
</feature>
<feature type="transmembrane region" description="Helical" evidence="1">
    <location>
        <begin position="122"/>
        <end position="142"/>
    </location>
</feature>
<feature type="transmembrane region" description="Helical" evidence="1">
    <location>
        <begin position="157"/>
        <end position="177"/>
    </location>
</feature>
<feature type="transmembrane region" description="Helical" evidence="1">
    <location>
        <begin position="189"/>
        <end position="209"/>
    </location>
</feature>
<feature type="transmembrane region" description="Helical" evidence="1">
    <location>
        <begin position="219"/>
        <end position="239"/>
    </location>
</feature>
<feature type="transmembrane region" description="Helical" evidence="1">
    <location>
        <begin position="276"/>
        <end position="296"/>
    </location>
</feature>
<feature type="transmembrane region" description="Helical" evidence="1">
    <location>
        <begin position="316"/>
        <end position="336"/>
    </location>
</feature>
<feature type="transmembrane region" description="Helical" evidence="1">
    <location>
        <begin position="378"/>
        <end position="398"/>
    </location>
</feature>
<feature type="transmembrane region" description="Helical" evidence="1">
    <location>
        <begin position="400"/>
        <end position="420"/>
    </location>
</feature>
<reference key="1">
    <citation type="submission" date="1996-02" db="EMBL/GenBank/DDBJ databases">
        <authorList>
            <person name="Poehling S."/>
            <person name="Piepersberg W."/>
            <person name="Wehmeier U.F."/>
        </authorList>
    </citation>
    <scope>NUCLEOTIDE SEQUENCE [GENOMIC DNA]</scope>
    <source>
        <strain>ATCC 14077 / CBS 700.72 / DSM 40480 / NBRC 13399 / VKM Ac-160</strain>
    </source>
</reference>
<accession>Q59912</accession>
<comment type="function">
    <text evidence="1">The central subunit of the protein translocation channel SecYEG. Consists of two halves formed by TMs 1-5 and 6-10. These two domains form a lateral gate at the front which open onto the bilayer between TMs 2 and 7, and are clamped together by SecE at the back. The channel is closed by both a pore ring composed of hydrophobic SecY resides and a short helix (helix 2A) on the extracellular side of the membrane which forms a plug. The plug probably moves laterally to allow the channel to open. The ring and the pore may move independently.</text>
</comment>
<comment type="subunit">
    <text evidence="1">Component of the Sec protein translocase complex. Heterotrimer consisting of SecY, SecE and SecG subunits. The heterotrimers can form oligomers, although 1 heterotrimer is thought to be able to translocate proteins. Interacts with the ribosome. Interacts with SecDF, and other proteins may be involved. Interacts with SecA.</text>
</comment>
<comment type="subcellular location">
    <subcellularLocation>
        <location evidence="1">Cell membrane</location>
        <topology evidence="1">Multi-pass membrane protein</topology>
    </subcellularLocation>
</comment>
<comment type="similarity">
    <text evidence="1">Belongs to the SecY/SEC61-alpha family.</text>
</comment>
<keyword id="KW-1003">Cell membrane</keyword>
<keyword id="KW-0472">Membrane</keyword>
<keyword id="KW-0653">Protein transport</keyword>
<keyword id="KW-0811">Translocation</keyword>
<keyword id="KW-0812">Transmembrane</keyword>
<keyword id="KW-1133">Transmembrane helix</keyword>
<keyword id="KW-0813">Transport</keyword>
<organism>
    <name type="scientific">Streptomyces galbus</name>
    <dbReference type="NCBI Taxonomy" id="33898"/>
    <lineage>
        <taxon>Bacteria</taxon>
        <taxon>Bacillati</taxon>
        <taxon>Actinomycetota</taxon>
        <taxon>Actinomycetes</taxon>
        <taxon>Kitasatosporales</taxon>
        <taxon>Streptomycetaceae</taxon>
        <taxon>Streptomyces</taxon>
    </lineage>
</organism>
<name>SECY_STRGB</name>
<evidence type="ECO:0000255" key="1">
    <source>
        <dbReference type="HAMAP-Rule" id="MF_01465"/>
    </source>
</evidence>
<dbReference type="EMBL" id="X95914">
    <property type="protein sequence ID" value="CAA65158.1"/>
    <property type="molecule type" value="Genomic_DNA"/>
</dbReference>
<dbReference type="SMR" id="Q59912"/>
<dbReference type="STRING" id="33898.GCA_000772895_04153"/>
<dbReference type="GO" id="GO:0005886">
    <property type="term" value="C:plasma membrane"/>
    <property type="evidence" value="ECO:0007669"/>
    <property type="project" value="UniProtKB-SubCell"/>
</dbReference>
<dbReference type="GO" id="GO:0065002">
    <property type="term" value="P:intracellular protein transmembrane transport"/>
    <property type="evidence" value="ECO:0007669"/>
    <property type="project" value="UniProtKB-UniRule"/>
</dbReference>
<dbReference type="GO" id="GO:0006605">
    <property type="term" value="P:protein targeting"/>
    <property type="evidence" value="ECO:0007669"/>
    <property type="project" value="UniProtKB-UniRule"/>
</dbReference>
<dbReference type="GO" id="GO:0043952">
    <property type="term" value="P:protein transport by the Sec complex"/>
    <property type="evidence" value="ECO:0007669"/>
    <property type="project" value="UniProtKB-UniRule"/>
</dbReference>
<dbReference type="FunFam" id="1.10.3370.10:FF:000001">
    <property type="entry name" value="Preprotein translocase subunit SecY"/>
    <property type="match status" value="1"/>
</dbReference>
<dbReference type="Gene3D" id="1.10.3370.10">
    <property type="entry name" value="SecY subunit domain"/>
    <property type="match status" value="1"/>
</dbReference>
<dbReference type="HAMAP" id="MF_01465">
    <property type="entry name" value="SecY"/>
    <property type="match status" value="1"/>
</dbReference>
<dbReference type="InterPro" id="IPR026593">
    <property type="entry name" value="SecY"/>
</dbReference>
<dbReference type="InterPro" id="IPR002208">
    <property type="entry name" value="SecY/SEC61-alpha"/>
</dbReference>
<dbReference type="InterPro" id="IPR030659">
    <property type="entry name" value="SecY_CS"/>
</dbReference>
<dbReference type="InterPro" id="IPR023201">
    <property type="entry name" value="SecY_dom_sf"/>
</dbReference>
<dbReference type="NCBIfam" id="TIGR00967">
    <property type="entry name" value="3a0501s007"/>
    <property type="match status" value="1"/>
</dbReference>
<dbReference type="PANTHER" id="PTHR10906">
    <property type="entry name" value="SECY/SEC61-ALPHA FAMILY MEMBER"/>
    <property type="match status" value="1"/>
</dbReference>
<dbReference type="Pfam" id="PF00344">
    <property type="entry name" value="SecY"/>
    <property type="match status" value="1"/>
</dbReference>
<dbReference type="PIRSF" id="PIRSF004557">
    <property type="entry name" value="SecY"/>
    <property type="match status" value="1"/>
</dbReference>
<dbReference type="PRINTS" id="PR00303">
    <property type="entry name" value="SECYTRNLCASE"/>
</dbReference>
<dbReference type="SUPFAM" id="SSF103491">
    <property type="entry name" value="Preprotein translocase SecY subunit"/>
    <property type="match status" value="1"/>
</dbReference>
<dbReference type="PROSITE" id="PS00755">
    <property type="entry name" value="SECY_1"/>
    <property type="match status" value="1"/>
</dbReference>
<dbReference type="PROSITE" id="PS00756">
    <property type="entry name" value="SECY_2"/>
    <property type="match status" value="1"/>
</dbReference>
<gene>
    <name evidence="1" type="primary">secY</name>
</gene>